<protein>
    <recommendedName>
        <fullName evidence="2">Eukaryotic translation initiation factor 3 subunit E-1</fullName>
        <shortName evidence="2">eIF3e-1</shortName>
    </recommendedName>
    <alternativeName>
        <fullName evidence="2">Eukaryotic translation initiation factor 3 subunit 6-1</fullName>
    </alternativeName>
</protein>
<accession>B4MYA1</accession>
<evidence type="ECO:0000250" key="1">
    <source>
        <dbReference type="UniProtKB" id="O77410"/>
    </source>
</evidence>
<evidence type="ECO:0000255" key="2">
    <source>
        <dbReference type="HAMAP-Rule" id="MF_03004"/>
    </source>
</evidence>
<evidence type="ECO:0000255" key="3">
    <source>
        <dbReference type="PROSITE-ProRule" id="PRU01185"/>
    </source>
</evidence>
<reference key="1">
    <citation type="journal article" date="2007" name="Nature">
        <title>Evolution of genes and genomes on the Drosophila phylogeny.</title>
        <authorList>
            <consortium name="Drosophila 12 genomes consortium"/>
        </authorList>
    </citation>
    <scope>NUCLEOTIDE SEQUENCE [LARGE SCALE GENOMIC DNA]</scope>
    <source>
        <strain>Tucson 14030-0811.24</strain>
    </source>
</reference>
<name>EI3E1_DROWI</name>
<proteinExistence type="inferred from homology"/>
<dbReference type="EMBL" id="CH963894">
    <property type="protein sequence ID" value="EDW77090.1"/>
    <property type="molecule type" value="Genomic_DNA"/>
</dbReference>
<dbReference type="SMR" id="B4MYA1"/>
<dbReference type="STRING" id="7260.B4MYA1"/>
<dbReference type="EnsemblMetazoa" id="FBtr0252765">
    <property type="protein sequence ID" value="FBpp0251257"/>
    <property type="gene ID" value="FBgn0224099"/>
</dbReference>
<dbReference type="EnsemblMetazoa" id="XM_002066068.3">
    <property type="protein sequence ID" value="XP_002066104.1"/>
    <property type="gene ID" value="LOC6643373"/>
</dbReference>
<dbReference type="GeneID" id="6643373"/>
<dbReference type="KEGG" id="dwi:6643373"/>
<dbReference type="eggNOG" id="KOG2758">
    <property type="taxonomic scope" value="Eukaryota"/>
</dbReference>
<dbReference type="HOGENOM" id="CLU_031132_0_1_1"/>
<dbReference type="OMA" id="IMEPNRP"/>
<dbReference type="OrthoDB" id="417252at2759"/>
<dbReference type="PhylomeDB" id="B4MYA1"/>
<dbReference type="Proteomes" id="UP000007798">
    <property type="component" value="Unassembled WGS sequence"/>
</dbReference>
<dbReference type="GO" id="GO:0016282">
    <property type="term" value="C:eukaryotic 43S preinitiation complex"/>
    <property type="evidence" value="ECO:0007669"/>
    <property type="project" value="UniProtKB-UniRule"/>
</dbReference>
<dbReference type="GO" id="GO:0033290">
    <property type="term" value="C:eukaryotic 48S preinitiation complex"/>
    <property type="evidence" value="ECO:0007669"/>
    <property type="project" value="UniProtKB-UniRule"/>
</dbReference>
<dbReference type="GO" id="GO:0071540">
    <property type="term" value="C:eukaryotic translation initiation factor 3 complex, eIF3e"/>
    <property type="evidence" value="ECO:0007669"/>
    <property type="project" value="UniProtKB-UniRule"/>
</dbReference>
<dbReference type="GO" id="GO:0003743">
    <property type="term" value="F:translation initiation factor activity"/>
    <property type="evidence" value="ECO:0007669"/>
    <property type="project" value="UniProtKB-UniRule"/>
</dbReference>
<dbReference type="GO" id="GO:0001732">
    <property type="term" value="P:formation of cytoplasmic translation initiation complex"/>
    <property type="evidence" value="ECO:0007669"/>
    <property type="project" value="UniProtKB-UniRule"/>
</dbReference>
<dbReference type="CDD" id="cd21378">
    <property type="entry name" value="eIF3E"/>
    <property type="match status" value="1"/>
</dbReference>
<dbReference type="HAMAP" id="MF_03004">
    <property type="entry name" value="eIF3e"/>
    <property type="match status" value="1"/>
</dbReference>
<dbReference type="InterPro" id="IPR016650">
    <property type="entry name" value="eIF3e"/>
</dbReference>
<dbReference type="InterPro" id="IPR019010">
    <property type="entry name" value="eIF3e_N"/>
</dbReference>
<dbReference type="InterPro" id="IPR000717">
    <property type="entry name" value="PCI_dom"/>
</dbReference>
<dbReference type="InterPro" id="IPR036390">
    <property type="entry name" value="WH_DNA-bd_sf"/>
</dbReference>
<dbReference type="PANTHER" id="PTHR10317">
    <property type="entry name" value="EUKARYOTIC TRANSLATION INITIATION FACTOR 3 SUBUNIT E"/>
    <property type="match status" value="1"/>
</dbReference>
<dbReference type="Pfam" id="PF09440">
    <property type="entry name" value="eIF3_N"/>
    <property type="match status" value="1"/>
</dbReference>
<dbReference type="Pfam" id="PF01399">
    <property type="entry name" value="PCI"/>
    <property type="match status" value="1"/>
</dbReference>
<dbReference type="PIRSF" id="PIRSF016255">
    <property type="entry name" value="eIF3e_su6"/>
    <property type="match status" value="1"/>
</dbReference>
<dbReference type="SMART" id="SM01186">
    <property type="entry name" value="eIF3_N"/>
    <property type="match status" value="1"/>
</dbReference>
<dbReference type="SMART" id="SM00088">
    <property type="entry name" value="PINT"/>
    <property type="match status" value="1"/>
</dbReference>
<dbReference type="SUPFAM" id="SSF46785">
    <property type="entry name" value="Winged helix' DNA-binding domain"/>
    <property type="match status" value="1"/>
</dbReference>
<dbReference type="PROSITE" id="PS50250">
    <property type="entry name" value="PCI"/>
    <property type="match status" value="1"/>
</dbReference>
<keyword id="KW-0963">Cytoplasm</keyword>
<keyword id="KW-0396">Initiation factor</keyword>
<keyword id="KW-0648">Protein biosynthesis</keyword>
<keyword id="KW-1185">Reference proteome</keyword>
<feature type="chain" id="PRO_0000365972" description="Eukaryotic translation initiation factor 3 subunit E-1">
    <location>
        <begin position="1"/>
        <end position="434"/>
    </location>
</feature>
<feature type="domain" description="PCI" evidence="3">
    <location>
        <begin position="219"/>
        <end position="392"/>
    </location>
</feature>
<comment type="function">
    <text evidence="2">Component of the eukaryotic translation initiation factor 3 (eIF-3) complex, which is involved in protein synthesis of a specialized repertoire of mRNAs and, together with other initiation factors, stimulates binding of mRNA and methionyl-tRNAi to the 40S ribosome. The eIF-3 complex specifically targets and initiates translation of a subset of mRNAs involved in cell proliferation.</text>
</comment>
<comment type="subunit">
    <text evidence="1 2">Component of the eukaryotic translation initiation factor 3 (eIF-3) complex. The eIF-3 complex interacts with pix. Interacts with mxt (By similarity).</text>
</comment>
<comment type="subcellular location">
    <subcellularLocation>
        <location evidence="2">Cytoplasm</location>
    </subcellularLocation>
</comment>
<comment type="similarity">
    <text evidence="2">Belongs to the eIF-3 subunit E family.</text>
</comment>
<sequence length="434" mass="51144">MAQFDLVHINCQYLDRHLTFPLLEFLCGKEIYNQQELLEYILETVKKTNMIDYTMDTRKRLNLSQEMPEELVQQKADVLATLKQLQNEVAPIMKATDILKDGETMKDSKTFVSALQRDYNFKMEHLYSAYKLAKYLYECGNYQESTSYLYFCLIVMAPSDKNYLDVLWGKLAAEILTLNWNTALEDLTRLRDYIDNASFSTLQALQQRTWLIHWSVLVFFNHPKGRDLIIEMFLYKPLYLNAIQTMCPHIMRYLATAVVINRTRRNALKDLIKVIQQESYTYRDPITEFLECLYVNFDFEGARLKLHECQTVILNDFFIVSCLNEFVEDARLMIFETFCRIHQCITISMLADKLNMKPNEAECWIVNLIRNARLNAKIDSKLGHVVMGTQPLSPYQQLVEKIDSLSMRSEHLADLIERKSKQKNQESIDSWKYY</sequence>
<gene>
    <name type="primary">eIF3-S6-1</name>
    <name type="synonym">Int6-1</name>
    <name type="ORF">GK22114</name>
</gene>
<organism>
    <name type="scientific">Drosophila willistoni</name>
    <name type="common">Fruit fly</name>
    <dbReference type="NCBI Taxonomy" id="7260"/>
    <lineage>
        <taxon>Eukaryota</taxon>
        <taxon>Metazoa</taxon>
        <taxon>Ecdysozoa</taxon>
        <taxon>Arthropoda</taxon>
        <taxon>Hexapoda</taxon>
        <taxon>Insecta</taxon>
        <taxon>Pterygota</taxon>
        <taxon>Neoptera</taxon>
        <taxon>Endopterygota</taxon>
        <taxon>Diptera</taxon>
        <taxon>Brachycera</taxon>
        <taxon>Muscomorpha</taxon>
        <taxon>Ephydroidea</taxon>
        <taxon>Drosophilidae</taxon>
        <taxon>Drosophila</taxon>
        <taxon>Sophophora</taxon>
    </lineage>
</organism>